<accession>Q8X5W0</accession>
<protein>
    <recommendedName>
        <fullName evidence="1">Vitamin B12 import ATP-binding protein BtuD</fullName>
        <ecNumber evidence="1">7.6.2.8</ecNumber>
    </recommendedName>
    <alternativeName>
        <fullName evidence="1">Vitamin B12-transporting ATPase</fullName>
    </alternativeName>
</protein>
<feature type="chain" id="PRO_0000091952" description="Vitamin B12 import ATP-binding protein BtuD">
    <location>
        <begin position="1"/>
        <end position="249"/>
    </location>
</feature>
<feature type="domain" description="ABC transporter" evidence="1">
    <location>
        <begin position="1"/>
        <end position="233"/>
    </location>
</feature>
<feature type="binding site" evidence="1">
    <location>
        <begin position="33"/>
        <end position="40"/>
    </location>
    <ligand>
        <name>ATP</name>
        <dbReference type="ChEBI" id="CHEBI:30616"/>
    </ligand>
</feature>
<proteinExistence type="inferred from homology"/>
<comment type="function">
    <text evidence="1">Part of the ABC transporter complex BtuCDF involved in vitamin B12 import. Responsible for energy coupling to the transport system.</text>
</comment>
<comment type="catalytic activity">
    <reaction evidence="1">
        <text>an R-cob(III)alamin(out) + ATP + H2O = an R-cob(III)alamin(in) + ADP + phosphate + H(+)</text>
        <dbReference type="Rhea" id="RHEA:17873"/>
        <dbReference type="ChEBI" id="CHEBI:15377"/>
        <dbReference type="ChEBI" id="CHEBI:15378"/>
        <dbReference type="ChEBI" id="CHEBI:30616"/>
        <dbReference type="ChEBI" id="CHEBI:43474"/>
        <dbReference type="ChEBI" id="CHEBI:140785"/>
        <dbReference type="ChEBI" id="CHEBI:456216"/>
        <dbReference type="EC" id="7.6.2.8"/>
    </reaction>
</comment>
<comment type="subunit">
    <text evidence="1">The complex is composed of two ATP-binding proteins (BtuD), two transmembrane proteins (BtuC) and a solute-binding protein (BtuF).</text>
</comment>
<comment type="subcellular location">
    <subcellularLocation>
        <location evidence="1">Cell inner membrane</location>
        <topology evidence="1">Peripheral membrane protein</topology>
    </subcellularLocation>
</comment>
<comment type="similarity">
    <text evidence="1">Belongs to the ABC transporter superfamily. Vitamin B12 importer (TC 3.A.1.13.1) family.</text>
</comment>
<sequence length="249" mass="27097">MSIVMQLQDVAESTRLGPLSGEVRAGEILHLVGPNGAGKSTLLARMAGMTSGKGSIQFAGQPLEAWSATKLALHRAYLSQQQTPPFAMPVWHYLTLHQHDKTRTELLNDVAGALALDDKLGRSTNQLSGGEWQRVRLAAVVLQITPQANPAGQLLLLDEPMNSLDVAQQSALDKILSALCQQGLAIVMSSHDLNHTLRHAHRAWLLKGGKMLASGRREDVLTPPNLAQAYGMNFRRLDIEGHRMLISTI</sequence>
<evidence type="ECO:0000255" key="1">
    <source>
        <dbReference type="HAMAP-Rule" id="MF_01005"/>
    </source>
</evidence>
<gene>
    <name evidence="1" type="primary">btuD</name>
    <name type="ordered locus">Z2738</name>
    <name type="ordered locus">ECs2416</name>
</gene>
<organism>
    <name type="scientific">Escherichia coli O157:H7</name>
    <dbReference type="NCBI Taxonomy" id="83334"/>
    <lineage>
        <taxon>Bacteria</taxon>
        <taxon>Pseudomonadati</taxon>
        <taxon>Pseudomonadota</taxon>
        <taxon>Gammaproteobacteria</taxon>
        <taxon>Enterobacterales</taxon>
        <taxon>Enterobacteriaceae</taxon>
        <taxon>Escherichia</taxon>
    </lineage>
</organism>
<dbReference type="EC" id="7.6.2.8" evidence="1"/>
<dbReference type="EMBL" id="AE005174">
    <property type="protein sequence ID" value="AAG56696.1"/>
    <property type="molecule type" value="Genomic_DNA"/>
</dbReference>
<dbReference type="EMBL" id="BA000007">
    <property type="protein sequence ID" value="BAB35839.1"/>
    <property type="molecule type" value="Genomic_DNA"/>
</dbReference>
<dbReference type="PIR" id="D85779">
    <property type="entry name" value="D85779"/>
</dbReference>
<dbReference type="PIR" id="H90930">
    <property type="entry name" value="H90930"/>
</dbReference>
<dbReference type="RefSeq" id="NP_310443.1">
    <property type="nucleotide sequence ID" value="NC_002695.1"/>
</dbReference>
<dbReference type="RefSeq" id="WP_000029463.1">
    <property type="nucleotide sequence ID" value="NZ_VOAI01000007.1"/>
</dbReference>
<dbReference type="SMR" id="Q8X5W0"/>
<dbReference type="STRING" id="155864.Z2738"/>
<dbReference type="GeneID" id="915033"/>
<dbReference type="KEGG" id="ece:Z2738"/>
<dbReference type="KEGG" id="ecs:ECs_2416"/>
<dbReference type="PATRIC" id="fig|386585.9.peg.2530"/>
<dbReference type="eggNOG" id="COG4138">
    <property type="taxonomic scope" value="Bacteria"/>
</dbReference>
<dbReference type="HOGENOM" id="CLU_000604_1_11_6"/>
<dbReference type="OMA" id="CAHDLNH"/>
<dbReference type="Proteomes" id="UP000000558">
    <property type="component" value="Chromosome"/>
</dbReference>
<dbReference type="Proteomes" id="UP000002519">
    <property type="component" value="Chromosome"/>
</dbReference>
<dbReference type="GO" id="GO:0005886">
    <property type="term" value="C:plasma membrane"/>
    <property type="evidence" value="ECO:0007669"/>
    <property type="project" value="UniProtKB-SubCell"/>
</dbReference>
<dbReference type="GO" id="GO:0015420">
    <property type="term" value="F:ABC-type vitamin B12 transporter activity"/>
    <property type="evidence" value="ECO:0007669"/>
    <property type="project" value="UniProtKB-UniRule"/>
</dbReference>
<dbReference type="GO" id="GO:0005524">
    <property type="term" value="F:ATP binding"/>
    <property type="evidence" value="ECO:0007669"/>
    <property type="project" value="UniProtKB-KW"/>
</dbReference>
<dbReference type="GO" id="GO:0016887">
    <property type="term" value="F:ATP hydrolysis activity"/>
    <property type="evidence" value="ECO:0007669"/>
    <property type="project" value="InterPro"/>
</dbReference>
<dbReference type="CDD" id="cd03214">
    <property type="entry name" value="ABC_Iron-Siderophores_B12_Hemin"/>
    <property type="match status" value="1"/>
</dbReference>
<dbReference type="FunFam" id="3.40.50.300:FF:000462">
    <property type="entry name" value="Vitamin B12 import ATP-binding protein BtuD"/>
    <property type="match status" value="1"/>
</dbReference>
<dbReference type="Gene3D" id="3.40.50.300">
    <property type="entry name" value="P-loop containing nucleotide triphosphate hydrolases"/>
    <property type="match status" value="1"/>
</dbReference>
<dbReference type="HAMAP" id="MF_01005">
    <property type="entry name" value="BtuD"/>
    <property type="match status" value="1"/>
</dbReference>
<dbReference type="InterPro" id="IPR003593">
    <property type="entry name" value="AAA+_ATPase"/>
</dbReference>
<dbReference type="InterPro" id="IPR003439">
    <property type="entry name" value="ABC_transporter-like_ATP-bd"/>
</dbReference>
<dbReference type="InterPro" id="IPR017871">
    <property type="entry name" value="ABC_transporter-like_CS"/>
</dbReference>
<dbReference type="InterPro" id="IPR023693">
    <property type="entry name" value="ABC_transptr_BtuD"/>
</dbReference>
<dbReference type="InterPro" id="IPR050153">
    <property type="entry name" value="Metal_Ion_Import_ABC"/>
</dbReference>
<dbReference type="InterPro" id="IPR027417">
    <property type="entry name" value="P-loop_NTPase"/>
</dbReference>
<dbReference type="NCBIfam" id="NF002981">
    <property type="entry name" value="PRK03695.1"/>
    <property type="match status" value="1"/>
</dbReference>
<dbReference type="PANTHER" id="PTHR42734">
    <property type="entry name" value="METAL TRANSPORT SYSTEM ATP-BINDING PROTEIN TM_0124-RELATED"/>
    <property type="match status" value="1"/>
</dbReference>
<dbReference type="PANTHER" id="PTHR42734:SF18">
    <property type="entry name" value="VITAMIN B12 IMPORT ATP-BINDING PROTEIN BTUD"/>
    <property type="match status" value="1"/>
</dbReference>
<dbReference type="Pfam" id="PF00005">
    <property type="entry name" value="ABC_tran"/>
    <property type="match status" value="1"/>
</dbReference>
<dbReference type="SMART" id="SM00382">
    <property type="entry name" value="AAA"/>
    <property type="match status" value="1"/>
</dbReference>
<dbReference type="SUPFAM" id="SSF52540">
    <property type="entry name" value="P-loop containing nucleoside triphosphate hydrolases"/>
    <property type="match status" value="1"/>
</dbReference>
<dbReference type="PROSITE" id="PS00211">
    <property type="entry name" value="ABC_TRANSPORTER_1"/>
    <property type="match status" value="1"/>
</dbReference>
<dbReference type="PROSITE" id="PS50893">
    <property type="entry name" value="ABC_TRANSPORTER_2"/>
    <property type="match status" value="1"/>
</dbReference>
<reference key="1">
    <citation type="journal article" date="2001" name="Nature">
        <title>Genome sequence of enterohaemorrhagic Escherichia coli O157:H7.</title>
        <authorList>
            <person name="Perna N.T."/>
            <person name="Plunkett G. III"/>
            <person name="Burland V."/>
            <person name="Mau B."/>
            <person name="Glasner J.D."/>
            <person name="Rose D.J."/>
            <person name="Mayhew G.F."/>
            <person name="Evans P.S."/>
            <person name="Gregor J."/>
            <person name="Kirkpatrick H.A."/>
            <person name="Posfai G."/>
            <person name="Hackett J."/>
            <person name="Klink S."/>
            <person name="Boutin A."/>
            <person name="Shao Y."/>
            <person name="Miller L."/>
            <person name="Grotbeck E.J."/>
            <person name="Davis N.W."/>
            <person name="Lim A."/>
            <person name="Dimalanta E.T."/>
            <person name="Potamousis K."/>
            <person name="Apodaca J."/>
            <person name="Anantharaman T.S."/>
            <person name="Lin J."/>
            <person name="Yen G."/>
            <person name="Schwartz D.C."/>
            <person name="Welch R.A."/>
            <person name="Blattner F.R."/>
        </authorList>
    </citation>
    <scope>NUCLEOTIDE SEQUENCE [LARGE SCALE GENOMIC DNA]</scope>
    <source>
        <strain>O157:H7 / EDL933 / ATCC 700927 / EHEC</strain>
    </source>
</reference>
<reference key="2">
    <citation type="journal article" date="2001" name="DNA Res.">
        <title>Complete genome sequence of enterohemorrhagic Escherichia coli O157:H7 and genomic comparison with a laboratory strain K-12.</title>
        <authorList>
            <person name="Hayashi T."/>
            <person name="Makino K."/>
            <person name="Ohnishi M."/>
            <person name="Kurokawa K."/>
            <person name="Ishii K."/>
            <person name="Yokoyama K."/>
            <person name="Han C.-G."/>
            <person name="Ohtsubo E."/>
            <person name="Nakayama K."/>
            <person name="Murata T."/>
            <person name="Tanaka M."/>
            <person name="Tobe T."/>
            <person name="Iida T."/>
            <person name="Takami H."/>
            <person name="Honda T."/>
            <person name="Sasakawa C."/>
            <person name="Ogasawara N."/>
            <person name="Yasunaga T."/>
            <person name="Kuhara S."/>
            <person name="Shiba T."/>
            <person name="Hattori M."/>
            <person name="Shinagawa H."/>
        </authorList>
    </citation>
    <scope>NUCLEOTIDE SEQUENCE [LARGE SCALE GENOMIC DNA]</scope>
    <source>
        <strain>O157:H7 / Sakai / RIMD 0509952 / EHEC</strain>
    </source>
</reference>
<name>BTUD_ECO57</name>
<keyword id="KW-0067">ATP-binding</keyword>
<keyword id="KW-0997">Cell inner membrane</keyword>
<keyword id="KW-1003">Cell membrane</keyword>
<keyword id="KW-0472">Membrane</keyword>
<keyword id="KW-0547">Nucleotide-binding</keyword>
<keyword id="KW-1185">Reference proteome</keyword>
<keyword id="KW-1278">Translocase</keyword>
<keyword id="KW-0813">Transport</keyword>